<protein>
    <recommendedName>
        <fullName>Putative ankyrin repeat protein L63</fullName>
    </recommendedName>
</protein>
<proteinExistence type="predicted"/>
<sequence length="580" mass="65285">MDDTYNKLPDEIWLEIINFSNEKNLLFTNKSFFELFDFMKVEEDIIECIIKYNLLHILAYIISLGGPESFIIKKNIITTESLNRHFKMSCEKGQYTIVTYLVALGADFRIDNDYGLIHAAKNGHIGVVKYLVSKGVNIGANDNCAIKFASENGHLEVVEYLVSKGADINANNNYPIEMASKNGHLKVVEYLVSLGVDIRANDDYVVGLAYYYDHHEVVDYLVSQGAVLNKSKYSSSYNAFILLPVEIWIKIVNHTQEIGLLLTNRSFFELLSLINIKVDIIEYISNNNLTDVLKYLVFLKSINHPFCRFIRYSSLDDYLVKSCCEGDLSIIKDLILLGASERKAVMLACQNGHLEIIRYFVSQGFNIKCGSNCAVTIASENGHIEVVRYLISLGADINSGNNYAIKYASENGHLEVVKYLVDQGANIRANNDRAVRFASRKGHLEVVKYLVSKGANIRAKDDRAVTLASQNGHLEVVKYLVSQGTDIKAGDDYAVRWASRNGHLEVVKYLISQGANIKADDDYAVRWASLNGHLEVVKFLVNQNADIRAINNYAVRWAHKNKHFDVVEYLISQGAVINPT</sequence>
<dbReference type="EMBL" id="AY653733">
    <property type="protein sequence ID" value="AAV50338.1"/>
    <property type="molecule type" value="Genomic_DNA"/>
</dbReference>
<dbReference type="SMR" id="Q5UPE2"/>
<dbReference type="Proteomes" id="UP000001134">
    <property type="component" value="Genome"/>
</dbReference>
<dbReference type="Gene3D" id="1.25.40.20">
    <property type="entry name" value="Ankyrin repeat-containing domain"/>
    <property type="match status" value="5"/>
</dbReference>
<dbReference type="InterPro" id="IPR002110">
    <property type="entry name" value="Ankyrin_rpt"/>
</dbReference>
<dbReference type="InterPro" id="IPR036770">
    <property type="entry name" value="Ankyrin_rpt-contain_sf"/>
</dbReference>
<dbReference type="PANTHER" id="PTHR24188">
    <property type="entry name" value="ANKYRIN REPEAT PROTEIN"/>
    <property type="match status" value="1"/>
</dbReference>
<dbReference type="PANTHER" id="PTHR24188:SF29">
    <property type="entry name" value="GH09064P"/>
    <property type="match status" value="1"/>
</dbReference>
<dbReference type="Pfam" id="PF00023">
    <property type="entry name" value="Ank"/>
    <property type="match status" value="1"/>
</dbReference>
<dbReference type="Pfam" id="PF12796">
    <property type="entry name" value="Ank_2"/>
    <property type="match status" value="4"/>
</dbReference>
<dbReference type="SMART" id="SM00248">
    <property type="entry name" value="ANK"/>
    <property type="match status" value="13"/>
</dbReference>
<dbReference type="SUPFAM" id="SSF48403">
    <property type="entry name" value="Ankyrin repeat"/>
    <property type="match status" value="2"/>
</dbReference>
<dbReference type="PROSITE" id="PS50297">
    <property type="entry name" value="ANK_REP_REGION"/>
    <property type="match status" value="2"/>
</dbReference>
<dbReference type="PROSITE" id="PS50088">
    <property type="entry name" value="ANK_REPEAT"/>
    <property type="match status" value="9"/>
</dbReference>
<organismHost>
    <name type="scientific">Acanthamoeba polyphaga</name>
    <name type="common">Amoeba</name>
    <dbReference type="NCBI Taxonomy" id="5757"/>
</organismHost>
<name>YL063_MIMIV</name>
<feature type="chain" id="PRO_0000067144" description="Putative ankyrin repeat protein L63">
    <location>
        <begin position="1"/>
        <end position="580"/>
    </location>
</feature>
<feature type="repeat" description="ANK 1">
    <location>
        <begin position="81"/>
        <end position="110"/>
    </location>
</feature>
<feature type="repeat" description="ANK 2">
    <location>
        <begin position="111"/>
        <end position="140"/>
    </location>
</feature>
<feature type="repeat" description="ANK 3">
    <location>
        <begin position="141"/>
        <end position="170"/>
    </location>
</feature>
<feature type="repeat" description="ANK 4">
    <location>
        <begin position="172"/>
        <end position="200"/>
    </location>
</feature>
<feature type="repeat" description="ANK 5">
    <location>
        <begin position="202"/>
        <end position="230"/>
    </location>
</feature>
<feature type="repeat" description="ANK 6">
    <location>
        <begin position="314"/>
        <end position="339"/>
    </location>
</feature>
<feature type="repeat" description="ANK 7">
    <location>
        <begin position="340"/>
        <end position="369"/>
    </location>
</feature>
<feature type="repeat" description="ANK 8">
    <location>
        <begin position="370"/>
        <end position="399"/>
    </location>
</feature>
<feature type="repeat" description="ANK 9">
    <location>
        <begin position="400"/>
        <end position="429"/>
    </location>
</feature>
<feature type="repeat" description="ANK 10">
    <location>
        <begin position="431"/>
        <end position="459"/>
    </location>
</feature>
<feature type="repeat" description="ANK 11">
    <location>
        <begin position="461"/>
        <end position="489"/>
    </location>
</feature>
<feature type="repeat" description="ANK 12">
    <location>
        <begin position="490"/>
        <end position="519"/>
    </location>
</feature>
<feature type="repeat" description="ANK 13">
    <location>
        <begin position="521"/>
        <end position="549"/>
    </location>
</feature>
<feature type="repeat" description="ANK 14">
    <location>
        <begin position="551"/>
        <end position="579"/>
    </location>
</feature>
<keyword id="KW-0040">ANK repeat</keyword>
<keyword id="KW-1185">Reference proteome</keyword>
<keyword id="KW-0677">Repeat</keyword>
<reference key="1">
    <citation type="journal article" date="2004" name="Science">
        <title>The 1.2-megabase genome sequence of Mimivirus.</title>
        <authorList>
            <person name="Raoult D."/>
            <person name="Audic S."/>
            <person name="Robert C."/>
            <person name="Abergel C."/>
            <person name="Renesto P."/>
            <person name="Ogata H."/>
            <person name="La Scola B."/>
            <person name="Susan M."/>
            <person name="Claverie J.-M."/>
        </authorList>
    </citation>
    <scope>NUCLEOTIDE SEQUENCE [LARGE SCALE GENOMIC DNA]</scope>
    <source>
        <strain>Rowbotham-Bradford</strain>
    </source>
</reference>
<gene>
    <name type="ordered locus">MIMI_L63</name>
</gene>
<organism>
    <name type="scientific">Acanthamoeba polyphaga mimivirus</name>
    <name type="common">APMV</name>
    <dbReference type="NCBI Taxonomy" id="212035"/>
    <lineage>
        <taxon>Viruses</taxon>
        <taxon>Varidnaviria</taxon>
        <taxon>Bamfordvirae</taxon>
        <taxon>Nucleocytoviricota</taxon>
        <taxon>Megaviricetes</taxon>
        <taxon>Imitervirales</taxon>
        <taxon>Mimiviridae</taxon>
        <taxon>Megamimivirinae</taxon>
        <taxon>Mimivirus</taxon>
        <taxon>Mimivirus bradfordmassiliense</taxon>
    </lineage>
</organism>
<accession>Q5UPE2</accession>